<comment type="function">
    <text evidence="1">Chemotactic factor that attracts monocytes. This protein can bind heparin (By similarity).</text>
</comment>
<comment type="subunit">
    <text evidence="1">Monomer or homodimer; in equilibrium.</text>
</comment>
<comment type="subcellular location">
    <subcellularLocation>
        <location evidence="1">Secreted</location>
    </subcellularLocation>
</comment>
<comment type="similarity">
    <text evidence="3">Belongs to the intercrine beta (chemokine CC) family.</text>
</comment>
<accession>Q9Z121</accession>
<protein>
    <recommendedName>
        <fullName>C-C motif chemokine 8</fullName>
    </recommendedName>
    <alternativeName>
        <fullName>Monocyte chemoattractant protein 2</fullName>
    </alternativeName>
    <alternativeName>
        <fullName>Monocyte chemotactic protein 2</fullName>
        <shortName>MCP-2</shortName>
    </alternativeName>
    <alternativeName>
        <fullName>Small-inducible cytokine A8</fullName>
    </alternativeName>
</protein>
<proteinExistence type="inferred from homology"/>
<sequence>MKIYAVLLCLLLIAVPVSPEKLTGPDKAPVTCCFHVLKLKIPLRVLKSYERINNIQCPMEAVVFQTKQGMSLCVDPTQKWVSEYMEILDQKSQILQP</sequence>
<reference key="1">
    <citation type="submission" date="1999-02" db="EMBL/GenBank/DDBJ databases">
        <authorList>
            <person name="Nomiyama H."/>
        </authorList>
    </citation>
    <scope>NUCLEOTIDE SEQUENCE [MRNA]</scope>
    <source>
        <strain>C57BL/6J</strain>
        <tissue>Mammary gland</tissue>
    </source>
</reference>
<reference key="2">
    <citation type="journal article" date="2005" name="Science">
        <title>The transcriptional landscape of the mammalian genome.</title>
        <authorList>
            <person name="Carninci P."/>
            <person name="Kasukawa T."/>
            <person name="Katayama S."/>
            <person name="Gough J."/>
            <person name="Frith M.C."/>
            <person name="Maeda N."/>
            <person name="Oyama R."/>
            <person name="Ravasi T."/>
            <person name="Lenhard B."/>
            <person name="Wells C."/>
            <person name="Kodzius R."/>
            <person name="Shimokawa K."/>
            <person name="Bajic V.B."/>
            <person name="Brenner S.E."/>
            <person name="Batalov S."/>
            <person name="Forrest A.R."/>
            <person name="Zavolan M."/>
            <person name="Davis M.J."/>
            <person name="Wilming L.G."/>
            <person name="Aidinis V."/>
            <person name="Allen J.E."/>
            <person name="Ambesi-Impiombato A."/>
            <person name="Apweiler R."/>
            <person name="Aturaliya R.N."/>
            <person name="Bailey T.L."/>
            <person name="Bansal M."/>
            <person name="Baxter L."/>
            <person name="Beisel K.W."/>
            <person name="Bersano T."/>
            <person name="Bono H."/>
            <person name="Chalk A.M."/>
            <person name="Chiu K.P."/>
            <person name="Choudhary V."/>
            <person name="Christoffels A."/>
            <person name="Clutterbuck D.R."/>
            <person name="Crowe M.L."/>
            <person name="Dalla E."/>
            <person name="Dalrymple B.P."/>
            <person name="de Bono B."/>
            <person name="Della Gatta G."/>
            <person name="di Bernardo D."/>
            <person name="Down T."/>
            <person name="Engstrom P."/>
            <person name="Fagiolini M."/>
            <person name="Faulkner G."/>
            <person name="Fletcher C.F."/>
            <person name="Fukushima T."/>
            <person name="Furuno M."/>
            <person name="Futaki S."/>
            <person name="Gariboldi M."/>
            <person name="Georgii-Hemming P."/>
            <person name="Gingeras T.R."/>
            <person name="Gojobori T."/>
            <person name="Green R.E."/>
            <person name="Gustincich S."/>
            <person name="Harbers M."/>
            <person name="Hayashi Y."/>
            <person name="Hensch T.K."/>
            <person name="Hirokawa N."/>
            <person name="Hill D."/>
            <person name="Huminiecki L."/>
            <person name="Iacono M."/>
            <person name="Ikeo K."/>
            <person name="Iwama A."/>
            <person name="Ishikawa T."/>
            <person name="Jakt M."/>
            <person name="Kanapin A."/>
            <person name="Katoh M."/>
            <person name="Kawasawa Y."/>
            <person name="Kelso J."/>
            <person name="Kitamura H."/>
            <person name="Kitano H."/>
            <person name="Kollias G."/>
            <person name="Krishnan S.P."/>
            <person name="Kruger A."/>
            <person name="Kummerfeld S.K."/>
            <person name="Kurochkin I.V."/>
            <person name="Lareau L.F."/>
            <person name="Lazarevic D."/>
            <person name="Lipovich L."/>
            <person name="Liu J."/>
            <person name="Liuni S."/>
            <person name="McWilliam S."/>
            <person name="Madan Babu M."/>
            <person name="Madera M."/>
            <person name="Marchionni L."/>
            <person name="Matsuda H."/>
            <person name="Matsuzawa S."/>
            <person name="Miki H."/>
            <person name="Mignone F."/>
            <person name="Miyake S."/>
            <person name="Morris K."/>
            <person name="Mottagui-Tabar S."/>
            <person name="Mulder N."/>
            <person name="Nakano N."/>
            <person name="Nakauchi H."/>
            <person name="Ng P."/>
            <person name="Nilsson R."/>
            <person name="Nishiguchi S."/>
            <person name="Nishikawa S."/>
            <person name="Nori F."/>
            <person name="Ohara O."/>
            <person name="Okazaki Y."/>
            <person name="Orlando V."/>
            <person name="Pang K.C."/>
            <person name="Pavan W.J."/>
            <person name="Pavesi G."/>
            <person name="Pesole G."/>
            <person name="Petrovsky N."/>
            <person name="Piazza S."/>
            <person name="Reed J."/>
            <person name="Reid J.F."/>
            <person name="Ring B.Z."/>
            <person name="Ringwald M."/>
            <person name="Rost B."/>
            <person name="Ruan Y."/>
            <person name="Salzberg S.L."/>
            <person name="Sandelin A."/>
            <person name="Schneider C."/>
            <person name="Schoenbach C."/>
            <person name="Sekiguchi K."/>
            <person name="Semple C.A."/>
            <person name="Seno S."/>
            <person name="Sessa L."/>
            <person name="Sheng Y."/>
            <person name="Shibata Y."/>
            <person name="Shimada H."/>
            <person name="Shimada K."/>
            <person name="Silva D."/>
            <person name="Sinclair B."/>
            <person name="Sperling S."/>
            <person name="Stupka E."/>
            <person name="Sugiura K."/>
            <person name="Sultana R."/>
            <person name="Takenaka Y."/>
            <person name="Taki K."/>
            <person name="Tammoja K."/>
            <person name="Tan S.L."/>
            <person name="Tang S."/>
            <person name="Taylor M.S."/>
            <person name="Tegner J."/>
            <person name="Teichmann S.A."/>
            <person name="Ueda H.R."/>
            <person name="van Nimwegen E."/>
            <person name="Verardo R."/>
            <person name="Wei C.L."/>
            <person name="Yagi K."/>
            <person name="Yamanishi H."/>
            <person name="Zabarovsky E."/>
            <person name="Zhu S."/>
            <person name="Zimmer A."/>
            <person name="Hide W."/>
            <person name="Bult C."/>
            <person name="Grimmond S.M."/>
            <person name="Teasdale R.D."/>
            <person name="Liu E.T."/>
            <person name="Brusic V."/>
            <person name="Quackenbush J."/>
            <person name="Wahlestedt C."/>
            <person name="Mattick J.S."/>
            <person name="Hume D.A."/>
            <person name="Kai C."/>
            <person name="Sasaki D."/>
            <person name="Tomaru Y."/>
            <person name="Fukuda S."/>
            <person name="Kanamori-Katayama M."/>
            <person name="Suzuki M."/>
            <person name="Aoki J."/>
            <person name="Arakawa T."/>
            <person name="Iida J."/>
            <person name="Imamura K."/>
            <person name="Itoh M."/>
            <person name="Kato T."/>
            <person name="Kawaji H."/>
            <person name="Kawagashira N."/>
            <person name="Kawashima T."/>
            <person name="Kojima M."/>
            <person name="Kondo S."/>
            <person name="Konno H."/>
            <person name="Nakano K."/>
            <person name="Ninomiya N."/>
            <person name="Nishio T."/>
            <person name="Okada M."/>
            <person name="Plessy C."/>
            <person name="Shibata K."/>
            <person name="Shiraki T."/>
            <person name="Suzuki S."/>
            <person name="Tagami M."/>
            <person name="Waki K."/>
            <person name="Watahiki A."/>
            <person name="Okamura-Oho Y."/>
            <person name="Suzuki H."/>
            <person name="Kawai J."/>
            <person name="Hayashizaki Y."/>
        </authorList>
    </citation>
    <scope>NUCLEOTIDE SEQUENCE [LARGE SCALE MRNA]</scope>
    <source>
        <strain>C57BL/6J</strain>
        <tissue>Pancreas</tissue>
    </source>
</reference>
<keyword id="KW-0145">Chemotaxis</keyword>
<keyword id="KW-0202">Cytokine</keyword>
<keyword id="KW-1015">Disulfide bond</keyword>
<keyword id="KW-0358">Heparin-binding</keyword>
<keyword id="KW-0395">Inflammatory response</keyword>
<keyword id="KW-1185">Reference proteome</keyword>
<keyword id="KW-0964">Secreted</keyword>
<keyword id="KW-0732">Signal</keyword>
<feature type="signal peptide" evidence="2">
    <location>
        <begin position="1"/>
        <end position="23"/>
    </location>
</feature>
<feature type="chain" id="PRO_0000005190" description="C-C motif chemokine 8">
    <location>
        <begin position="24"/>
        <end position="97"/>
    </location>
</feature>
<feature type="disulfide bond" evidence="1">
    <location>
        <begin position="32"/>
        <end position="57"/>
    </location>
</feature>
<feature type="disulfide bond" evidence="1">
    <location>
        <begin position="33"/>
        <end position="73"/>
    </location>
</feature>
<gene>
    <name type="primary">Ccl8</name>
    <name type="synonym">Mcp2</name>
    <name type="synonym">Scya8</name>
</gene>
<evidence type="ECO:0000250" key="1"/>
<evidence type="ECO:0000250" key="2">
    <source>
        <dbReference type="UniProtKB" id="P80075"/>
    </source>
</evidence>
<evidence type="ECO:0000305" key="3"/>
<dbReference type="EMBL" id="AB023418">
    <property type="protein sequence ID" value="BAA75014.1"/>
    <property type="molecule type" value="mRNA"/>
</dbReference>
<dbReference type="EMBL" id="AK007942">
    <property type="protein sequence ID" value="BAB25365.1"/>
    <property type="molecule type" value="mRNA"/>
</dbReference>
<dbReference type="CCDS" id="CCDS36248.1"/>
<dbReference type="RefSeq" id="NP_067418.1">
    <property type="nucleotide sequence ID" value="NM_021443.3"/>
</dbReference>
<dbReference type="SMR" id="Q9Z121"/>
<dbReference type="FunCoup" id="Q9Z121">
    <property type="interactions" value="553"/>
</dbReference>
<dbReference type="STRING" id="10090.ENSMUSP00000009329"/>
<dbReference type="iPTMnet" id="Q9Z121"/>
<dbReference type="PhosphoSitePlus" id="Q9Z121"/>
<dbReference type="jPOST" id="Q9Z121"/>
<dbReference type="PaxDb" id="10090-ENSMUSP00000009329"/>
<dbReference type="ProteomicsDB" id="281334"/>
<dbReference type="DNASU" id="20307"/>
<dbReference type="Ensembl" id="ENSMUST00000009329.3">
    <property type="protein sequence ID" value="ENSMUSP00000009329.3"/>
    <property type="gene ID" value="ENSMUSG00000009185.3"/>
</dbReference>
<dbReference type="GeneID" id="20307"/>
<dbReference type="KEGG" id="mmu:20307"/>
<dbReference type="UCSC" id="uc007kmt.2">
    <property type="organism name" value="mouse"/>
</dbReference>
<dbReference type="AGR" id="MGI:101878"/>
<dbReference type="CTD" id="6355"/>
<dbReference type="MGI" id="MGI:101878">
    <property type="gene designation" value="Ccl8"/>
</dbReference>
<dbReference type="VEuPathDB" id="HostDB:ENSMUSG00000009185"/>
<dbReference type="GeneTree" id="ENSGT01130000278316"/>
<dbReference type="HOGENOM" id="CLU_141716_1_0_1"/>
<dbReference type="InParanoid" id="Q9Z121"/>
<dbReference type="OMA" id="SICANPG"/>
<dbReference type="OrthoDB" id="9930747at2759"/>
<dbReference type="PhylomeDB" id="Q9Z121"/>
<dbReference type="TreeFam" id="TF334888"/>
<dbReference type="BioGRID-ORCS" id="20307">
    <property type="hits" value="1 hit in 78 CRISPR screens"/>
</dbReference>
<dbReference type="ChiTaRS" id="Ccl8">
    <property type="organism name" value="mouse"/>
</dbReference>
<dbReference type="PRO" id="PR:Q9Z121"/>
<dbReference type="Proteomes" id="UP000000589">
    <property type="component" value="Chromosome 11"/>
</dbReference>
<dbReference type="RNAct" id="Q9Z121">
    <property type="molecule type" value="protein"/>
</dbReference>
<dbReference type="Bgee" id="ENSMUSG00000009185">
    <property type="expression patterns" value="Expressed in peripheral lymph node and 90 other cell types or tissues"/>
</dbReference>
<dbReference type="ExpressionAtlas" id="Q9Z121">
    <property type="expression patterns" value="baseline and differential"/>
</dbReference>
<dbReference type="GO" id="GO:0005615">
    <property type="term" value="C:extracellular space"/>
    <property type="evidence" value="ECO:0000314"/>
    <property type="project" value="MGI"/>
</dbReference>
<dbReference type="GO" id="GO:0008009">
    <property type="term" value="F:chemokine activity"/>
    <property type="evidence" value="ECO:0007669"/>
    <property type="project" value="InterPro"/>
</dbReference>
<dbReference type="GO" id="GO:0008201">
    <property type="term" value="F:heparin binding"/>
    <property type="evidence" value="ECO:0007669"/>
    <property type="project" value="UniProtKB-KW"/>
</dbReference>
<dbReference type="GO" id="GO:0016004">
    <property type="term" value="F:phospholipase activator activity"/>
    <property type="evidence" value="ECO:0007669"/>
    <property type="project" value="Ensembl"/>
</dbReference>
<dbReference type="GO" id="GO:0004672">
    <property type="term" value="F:protein kinase activity"/>
    <property type="evidence" value="ECO:0007669"/>
    <property type="project" value="Ensembl"/>
</dbReference>
<dbReference type="GO" id="GO:0006816">
    <property type="term" value="P:calcium ion transport"/>
    <property type="evidence" value="ECO:0007669"/>
    <property type="project" value="Ensembl"/>
</dbReference>
<dbReference type="GO" id="GO:0007267">
    <property type="term" value="P:cell-cell signaling"/>
    <property type="evidence" value="ECO:0007669"/>
    <property type="project" value="Ensembl"/>
</dbReference>
<dbReference type="GO" id="GO:0006887">
    <property type="term" value="P:exocytosis"/>
    <property type="evidence" value="ECO:0007669"/>
    <property type="project" value="Ensembl"/>
</dbReference>
<dbReference type="GO" id="GO:0006955">
    <property type="term" value="P:immune response"/>
    <property type="evidence" value="ECO:0007669"/>
    <property type="project" value="InterPro"/>
</dbReference>
<dbReference type="GO" id="GO:0006954">
    <property type="term" value="P:inflammatory response"/>
    <property type="evidence" value="ECO:0007669"/>
    <property type="project" value="UniProtKB-KW"/>
</dbReference>
<dbReference type="GO" id="GO:0006874">
    <property type="term" value="P:intracellular calcium ion homeostasis"/>
    <property type="evidence" value="ECO:0007669"/>
    <property type="project" value="Ensembl"/>
</dbReference>
<dbReference type="GO" id="GO:0044828">
    <property type="term" value="P:negative regulation by host of viral genome replication"/>
    <property type="evidence" value="ECO:0007669"/>
    <property type="project" value="Ensembl"/>
</dbReference>
<dbReference type="GO" id="GO:0045663">
    <property type="term" value="P:positive regulation of myoblast differentiation"/>
    <property type="evidence" value="ECO:0000315"/>
    <property type="project" value="MGI"/>
</dbReference>
<dbReference type="GO" id="GO:1901741">
    <property type="term" value="P:positive regulation of myoblast fusion"/>
    <property type="evidence" value="ECO:0000315"/>
    <property type="project" value="MGI"/>
</dbReference>
<dbReference type="CDD" id="cd00272">
    <property type="entry name" value="Chemokine_CC"/>
    <property type="match status" value="1"/>
</dbReference>
<dbReference type="FunFam" id="2.40.50.40:FF:000002">
    <property type="entry name" value="C-C motif chemokine"/>
    <property type="match status" value="1"/>
</dbReference>
<dbReference type="Gene3D" id="2.40.50.40">
    <property type="match status" value="1"/>
</dbReference>
<dbReference type="InterPro" id="IPR039809">
    <property type="entry name" value="Chemokine_b/g/d"/>
</dbReference>
<dbReference type="InterPro" id="IPR000827">
    <property type="entry name" value="Chemokine_CC_CS"/>
</dbReference>
<dbReference type="InterPro" id="IPR001811">
    <property type="entry name" value="Chemokine_IL8-like_dom"/>
</dbReference>
<dbReference type="InterPro" id="IPR036048">
    <property type="entry name" value="Interleukin_8-like_sf"/>
</dbReference>
<dbReference type="PANTHER" id="PTHR12015:SF209">
    <property type="entry name" value="C-C MOTIF CHEMOKINE 8"/>
    <property type="match status" value="1"/>
</dbReference>
<dbReference type="PANTHER" id="PTHR12015">
    <property type="entry name" value="SMALL INDUCIBLE CYTOKINE A"/>
    <property type="match status" value="1"/>
</dbReference>
<dbReference type="Pfam" id="PF00048">
    <property type="entry name" value="IL8"/>
    <property type="match status" value="1"/>
</dbReference>
<dbReference type="SMART" id="SM00199">
    <property type="entry name" value="SCY"/>
    <property type="match status" value="1"/>
</dbReference>
<dbReference type="SUPFAM" id="SSF54117">
    <property type="entry name" value="Interleukin 8-like chemokines"/>
    <property type="match status" value="1"/>
</dbReference>
<dbReference type="PROSITE" id="PS00472">
    <property type="entry name" value="SMALL_CYTOKINES_CC"/>
    <property type="match status" value="1"/>
</dbReference>
<name>CCL8_MOUSE</name>
<organism>
    <name type="scientific">Mus musculus</name>
    <name type="common">Mouse</name>
    <dbReference type="NCBI Taxonomy" id="10090"/>
    <lineage>
        <taxon>Eukaryota</taxon>
        <taxon>Metazoa</taxon>
        <taxon>Chordata</taxon>
        <taxon>Craniata</taxon>
        <taxon>Vertebrata</taxon>
        <taxon>Euteleostomi</taxon>
        <taxon>Mammalia</taxon>
        <taxon>Eutheria</taxon>
        <taxon>Euarchontoglires</taxon>
        <taxon>Glires</taxon>
        <taxon>Rodentia</taxon>
        <taxon>Myomorpha</taxon>
        <taxon>Muroidea</taxon>
        <taxon>Muridae</taxon>
        <taxon>Murinae</taxon>
        <taxon>Mus</taxon>
        <taxon>Mus</taxon>
    </lineage>
</organism>